<name>TGT_STRT2</name>
<organism>
    <name type="scientific">Streptococcus thermophilus (strain ATCC BAA-250 / LMG 18311)</name>
    <dbReference type="NCBI Taxonomy" id="264199"/>
    <lineage>
        <taxon>Bacteria</taxon>
        <taxon>Bacillati</taxon>
        <taxon>Bacillota</taxon>
        <taxon>Bacilli</taxon>
        <taxon>Lactobacillales</taxon>
        <taxon>Streptococcaceae</taxon>
        <taxon>Streptococcus</taxon>
    </lineage>
</organism>
<evidence type="ECO:0000255" key="1">
    <source>
        <dbReference type="HAMAP-Rule" id="MF_00168"/>
    </source>
</evidence>
<accession>Q5M2K9</accession>
<reference key="1">
    <citation type="journal article" date="2004" name="Nat. Biotechnol.">
        <title>Complete sequence and comparative genome analysis of the dairy bacterium Streptococcus thermophilus.</title>
        <authorList>
            <person name="Bolotin A."/>
            <person name="Quinquis B."/>
            <person name="Renault P."/>
            <person name="Sorokin A."/>
            <person name="Ehrlich S.D."/>
            <person name="Kulakauskas S."/>
            <person name="Lapidus A."/>
            <person name="Goltsman E."/>
            <person name="Mazur M."/>
            <person name="Pusch G.D."/>
            <person name="Fonstein M."/>
            <person name="Overbeek R."/>
            <person name="Kyprides N."/>
            <person name="Purnelle B."/>
            <person name="Prozzi D."/>
            <person name="Ngui K."/>
            <person name="Masuy D."/>
            <person name="Hancy F."/>
            <person name="Burteau S."/>
            <person name="Boutry M."/>
            <person name="Delcour J."/>
            <person name="Goffeau A."/>
            <person name="Hols P."/>
        </authorList>
    </citation>
    <scope>NUCLEOTIDE SEQUENCE [LARGE SCALE GENOMIC DNA]</scope>
    <source>
        <strain>ATCC BAA-250 / LMG 18311</strain>
    </source>
</reference>
<gene>
    <name evidence="1" type="primary">tgt</name>
    <name type="ordered locus">stu1806</name>
</gene>
<keyword id="KW-0328">Glycosyltransferase</keyword>
<keyword id="KW-0479">Metal-binding</keyword>
<keyword id="KW-0671">Queuosine biosynthesis</keyword>
<keyword id="KW-1185">Reference proteome</keyword>
<keyword id="KW-0808">Transferase</keyword>
<keyword id="KW-0819">tRNA processing</keyword>
<keyword id="KW-0862">Zinc</keyword>
<dbReference type="EC" id="2.4.2.29" evidence="1"/>
<dbReference type="EMBL" id="CP000023">
    <property type="protein sequence ID" value="AAV61405.1"/>
    <property type="molecule type" value="Genomic_DNA"/>
</dbReference>
<dbReference type="RefSeq" id="WP_011226586.1">
    <property type="nucleotide sequence ID" value="NC_006448.1"/>
</dbReference>
<dbReference type="SMR" id="Q5M2K9"/>
<dbReference type="STRING" id="264199.stu1806"/>
<dbReference type="GeneID" id="66899543"/>
<dbReference type="KEGG" id="stl:stu1806"/>
<dbReference type="PATRIC" id="fig|264199.4.peg.1784"/>
<dbReference type="eggNOG" id="COG0343">
    <property type="taxonomic scope" value="Bacteria"/>
</dbReference>
<dbReference type="HOGENOM" id="CLU_022060_0_1_9"/>
<dbReference type="UniPathway" id="UPA00392"/>
<dbReference type="Proteomes" id="UP000001170">
    <property type="component" value="Chromosome"/>
</dbReference>
<dbReference type="GO" id="GO:0005829">
    <property type="term" value="C:cytosol"/>
    <property type="evidence" value="ECO:0007669"/>
    <property type="project" value="TreeGrafter"/>
</dbReference>
<dbReference type="GO" id="GO:0046872">
    <property type="term" value="F:metal ion binding"/>
    <property type="evidence" value="ECO:0007669"/>
    <property type="project" value="UniProtKB-KW"/>
</dbReference>
<dbReference type="GO" id="GO:0008479">
    <property type="term" value="F:tRNA-guanosine(34) queuine transglycosylase activity"/>
    <property type="evidence" value="ECO:0007669"/>
    <property type="project" value="UniProtKB-UniRule"/>
</dbReference>
<dbReference type="GO" id="GO:0008616">
    <property type="term" value="P:queuosine biosynthetic process"/>
    <property type="evidence" value="ECO:0007669"/>
    <property type="project" value="UniProtKB-UniRule"/>
</dbReference>
<dbReference type="GO" id="GO:0002099">
    <property type="term" value="P:tRNA wobble guanine modification"/>
    <property type="evidence" value="ECO:0007669"/>
    <property type="project" value="TreeGrafter"/>
</dbReference>
<dbReference type="GO" id="GO:0101030">
    <property type="term" value="P:tRNA-guanine transglycosylation"/>
    <property type="evidence" value="ECO:0007669"/>
    <property type="project" value="InterPro"/>
</dbReference>
<dbReference type="FunFam" id="3.20.20.105:FF:000001">
    <property type="entry name" value="Queuine tRNA-ribosyltransferase"/>
    <property type="match status" value="1"/>
</dbReference>
<dbReference type="Gene3D" id="3.20.20.105">
    <property type="entry name" value="Queuine tRNA-ribosyltransferase-like"/>
    <property type="match status" value="1"/>
</dbReference>
<dbReference type="HAMAP" id="MF_00168">
    <property type="entry name" value="Q_tRNA_Tgt"/>
    <property type="match status" value="1"/>
</dbReference>
<dbReference type="InterPro" id="IPR050076">
    <property type="entry name" value="ArchSynthase1/Queuine_TRR"/>
</dbReference>
<dbReference type="InterPro" id="IPR004803">
    <property type="entry name" value="TGT"/>
</dbReference>
<dbReference type="InterPro" id="IPR036511">
    <property type="entry name" value="TGT-like_sf"/>
</dbReference>
<dbReference type="InterPro" id="IPR002616">
    <property type="entry name" value="tRNA_ribo_trans-like"/>
</dbReference>
<dbReference type="NCBIfam" id="TIGR00430">
    <property type="entry name" value="Q_tRNA_tgt"/>
    <property type="match status" value="1"/>
</dbReference>
<dbReference type="NCBIfam" id="TIGR00449">
    <property type="entry name" value="tgt_general"/>
    <property type="match status" value="1"/>
</dbReference>
<dbReference type="PANTHER" id="PTHR46499">
    <property type="entry name" value="QUEUINE TRNA-RIBOSYLTRANSFERASE"/>
    <property type="match status" value="1"/>
</dbReference>
<dbReference type="PANTHER" id="PTHR46499:SF1">
    <property type="entry name" value="QUEUINE TRNA-RIBOSYLTRANSFERASE"/>
    <property type="match status" value="1"/>
</dbReference>
<dbReference type="Pfam" id="PF01702">
    <property type="entry name" value="TGT"/>
    <property type="match status" value="1"/>
</dbReference>
<dbReference type="SUPFAM" id="SSF51713">
    <property type="entry name" value="tRNA-guanine transglycosylase"/>
    <property type="match status" value="1"/>
</dbReference>
<feature type="chain" id="PRO_0000135540" description="Queuine tRNA-ribosyltransferase">
    <location>
        <begin position="1"/>
        <end position="380"/>
    </location>
</feature>
<feature type="region of interest" description="RNA binding" evidence="1">
    <location>
        <begin position="251"/>
        <end position="257"/>
    </location>
</feature>
<feature type="region of interest" description="RNA binding; important for wobble base 34 recognition" evidence="1">
    <location>
        <begin position="275"/>
        <end position="279"/>
    </location>
</feature>
<feature type="active site" description="Proton acceptor" evidence="1">
    <location>
        <position position="96"/>
    </location>
</feature>
<feature type="active site" description="Nucleophile" evidence="1">
    <location>
        <position position="270"/>
    </location>
</feature>
<feature type="binding site" evidence="1">
    <location>
        <begin position="96"/>
        <end position="100"/>
    </location>
    <ligand>
        <name>substrate</name>
    </ligand>
</feature>
<feature type="binding site" evidence="1">
    <location>
        <position position="150"/>
    </location>
    <ligand>
        <name>substrate</name>
    </ligand>
</feature>
<feature type="binding site" evidence="1">
    <location>
        <position position="193"/>
    </location>
    <ligand>
        <name>substrate</name>
    </ligand>
</feature>
<feature type="binding site" evidence="1">
    <location>
        <position position="220"/>
    </location>
    <ligand>
        <name>substrate</name>
    </ligand>
</feature>
<feature type="binding site" evidence="1">
    <location>
        <position position="308"/>
    </location>
    <ligand>
        <name>Zn(2+)</name>
        <dbReference type="ChEBI" id="CHEBI:29105"/>
    </ligand>
</feature>
<feature type="binding site" evidence="1">
    <location>
        <position position="310"/>
    </location>
    <ligand>
        <name>Zn(2+)</name>
        <dbReference type="ChEBI" id="CHEBI:29105"/>
    </ligand>
</feature>
<feature type="binding site" evidence="1">
    <location>
        <position position="313"/>
    </location>
    <ligand>
        <name>Zn(2+)</name>
        <dbReference type="ChEBI" id="CHEBI:29105"/>
    </ligand>
</feature>
<feature type="binding site" evidence="1">
    <location>
        <position position="339"/>
    </location>
    <ligand>
        <name>Zn(2+)</name>
        <dbReference type="ChEBI" id="CHEBI:29105"/>
    </ligand>
</feature>
<proteinExistence type="inferred from homology"/>
<comment type="function">
    <text evidence="1">Catalyzes the base-exchange of a guanine (G) residue with the queuine precursor 7-aminomethyl-7-deazaguanine (PreQ1) at position 34 (anticodon wobble position) in tRNAs with GU(N) anticodons (tRNA-Asp, -Asn, -His and -Tyr). Catalysis occurs through a double-displacement mechanism. The nucleophile active site attacks the C1' of nucleotide 34 to detach the guanine base from the RNA, forming a covalent enzyme-RNA intermediate. The proton acceptor active site deprotonates the incoming PreQ1, allowing a nucleophilic attack on the C1' of the ribose to form the product. After dissociation, two additional enzymatic reactions on the tRNA convert PreQ1 to queuine (Q), resulting in the hypermodified nucleoside queuosine (7-(((4,5-cis-dihydroxy-2-cyclopenten-1-yl)amino)methyl)-7-deazaguanosine).</text>
</comment>
<comment type="catalytic activity">
    <reaction evidence="1">
        <text>7-aminomethyl-7-carbaguanine + guanosine(34) in tRNA = 7-aminomethyl-7-carbaguanosine(34) in tRNA + guanine</text>
        <dbReference type="Rhea" id="RHEA:24104"/>
        <dbReference type="Rhea" id="RHEA-COMP:10341"/>
        <dbReference type="Rhea" id="RHEA-COMP:10342"/>
        <dbReference type="ChEBI" id="CHEBI:16235"/>
        <dbReference type="ChEBI" id="CHEBI:58703"/>
        <dbReference type="ChEBI" id="CHEBI:74269"/>
        <dbReference type="ChEBI" id="CHEBI:82833"/>
        <dbReference type="EC" id="2.4.2.29"/>
    </reaction>
</comment>
<comment type="cofactor">
    <cofactor evidence="1">
        <name>Zn(2+)</name>
        <dbReference type="ChEBI" id="CHEBI:29105"/>
    </cofactor>
    <text evidence="1">Binds 1 zinc ion per subunit.</text>
</comment>
<comment type="pathway">
    <text evidence="1">tRNA modification; tRNA-queuosine biosynthesis.</text>
</comment>
<comment type="subunit">
    <text evidence="1">Homodimer. Within each dimer, one monomer is responsible for RNA recognition and catalysis, while the other monomer binds to the replacement base PreQ1.</text>
</comment>
<comment type="similarity">
    <text evidence="1">Belongs to the queuine tRNA-ribosyltransferase family.</text>
</comment>
<protein>
    <recommendedName>
        <fullName evidence="1">Queuine tRNA-ribosyltransferase</fullName>
        <ecNumber evidence="1">2.4.2.29</ecNumber>
    </recommendedName>
    <alternativeName>
        <fullName evidence="1">Guanine insertion enzyme</fullName>
    </alternativeName>
    <alternativeName>
        <fullName evidence="1">tRNA-guanine transglycosylase</fullName>
    </alternativeName>
</protein>
<sequence>MIDFPIKYRLIKKEKYTGARLGEIITPHGTFPTPMFMPVGTQATVKTQSPEELQQMGSGIILANTYHLWLRPGDELIAKAGGLHKFMNWDQAILTDSGGFQVYSLAEKRDISEEGVTFKNHLNGSKMFLSPEKAISVQNNLGSDIMMSFDECPQFYQPYDYVKKSIERTSRWAERGLKAHRRPHDQGLFGIVQGAGFEDLRRQSSHDLVSMDFPGYSIGGLAVGETHEEMNAVLDFTVPLLPENKPRYLMGVGAPDSLIDGVIRGVDMYDCVLPTRIARNGTCMTSNGRLVVKNAAYAEDFSPIDPECDCYTCKNYTRAYVRHLLKADETFGIRLTSYHNLYFLVNLMAKVRQAIVDDNLLEFRQDFIEKYGYNASNRNF</sequence>